<feature type="chain" id="PRO_0000142437" description="Adenine deaminase">
    <location>
        <begin position="1"/>
        <end position="603"/>
    </location>
</feature>
<evidence type="ECO:0000255" key="1">
    <source>
        <dbReference type="HAMAP-Rule" id="MF_01518"/>
    </source>
</evidence>
<reference key="1">
    <citation type="journal article" date="2004" name="Nature">
        <title>Genome sequence of Silicibacter pomeroyi reveals adaptations to the marine environment.</title>
        <authorList>
            <person name="Moran M.A."/>
            <person name="Buchan A."/>
            <person name="Gonzalez J.M."/>
            <person name="Heidelberg J.F."/>
            <person name="Whitman W.B."/>
            <person name="Kiene R.P."/>
            <person name="Henriksen J.R."/>
            <person name="King G.M."/>
            <person name="Belas R."/>
            <person name="Fuqua C."/>
            <person name="Brinkac L.M."/>
            <person name="Lewis M."/>
            <person name="Johri S."/>
            <person name="Weaver B."/>
            <person name="Pai G."/>
            <person name="Eisen J.A."/>
            <person name="Rahe E."/>
            <person name="Sheldon W.M."/>
            <person name="Ye W."/>
            <person name="Miller T.R."/>
            <person name="Carlton J."/>
            <person name="Rasko D.A."/>
            <person name="Paulsen I.T."/>
            <person name="Ren Q."/>
            <person name="Daugherty S.C."/>
            <person name="DeBoy R.T."/>
            <person name="Dodson R.J."/>
            <person name="Durkin A.S."/>
            <person name="Madupu R."/>
            <person name="Nelson W.C."/>
            <person name="Sullivan S.A."/>
            <person name="Rosovitz M.J."/>
            <person name="Haft D.H."/>
            <person name="Selengut J."/>
            <person name="Ward N."/>
        </authorList>
    </citation>
    <scope>NUCLEOTIDE SEQUENCE [LARGE SCALE GENOMIC DNA]</scope>
    <source>
        <strain>ATCC 700808 / DSM 15171 / DSS-3</strain>
    </source>
</reference>
<reference key="2">
    <citation type="journal article" date="2014" name="Stand. Genomic Sci.">
        <title>An updated genome annotation for the model marine bacterium Ruegeria pomeroyi DSS-3.</title>
        <authorList>
            <person name="Rivers A.R."/>
            <person name="Smith C.B."/>
            <person name="Moran M.A."/>
        </authorList>
    </citation>
    <scope>GENOME REANNOTATION</scope>
    <source>
        <strain>ATCC 700808 / DSM 15171 / DSS-3</strain>
    </source>
</reference>
<name>ADEC_RUEPO</name>
<sequence>MEPTTFPSWADVAPRLVAVAAGREPADMIIRNGTWINVHTREALPGHSIAIAEGRIAFVGPDASHCSGPDTRIIEANGRYMIPGLCDGHMHIESGMLTPAEFAAAVIPHGTTTMFTDPHEIANVLGLAGVRMMHDEALMQPVNIFTQMPSCAPSAPGLETTGYEITPEDVAEAMTWPGIIGLGEMMNFPGVTNADPKMLAEIAATQRAGKTVGGHYASPDLGPAFAAYVAGGPADDHEGTCEADAIARVRQGMRSMMRLGSAWYDVETQITAVTEKGLDPRNFILCTDDCHSATLVNDGHMNRVVRHAIACGCDPLIALQMATINTATHFGLERELGSTAPGRRADVILTSDLRDLPIELVIARGQVVAENGKIAVDCPHYDWPDTARGTVHLGHALSARDFEIAAPTGANRVRANVIGVVENQAPTKALKAELPVREGLVETAEHPDDVCQIALVERHRATGGVTNAFVSGFGYQGRMAMASTVAHDSHHMIVVGTDREQMALAANRLAEVGGGITIWRDGQELALVELPIAGLMSDSPAAEVAAKAQAMVEAMAACGCTLNNAYMQHSLLALVVIPELRISDLGLIDVRSFERIDLLEPLA</sequence>
<accession>Q5LM18</accession>
<gene>
    <name evidence="1" type="primary">ade</name>
    <name type="ordered locus">SPO3746</name>
</gene>
<protein>
    <recommendedName>
        <fullName evidence="1">Adenine deaminase</fullName>
        <shortName evidence="1">Adenase</shortName>
        <shortName evidence="1">Adenine aminase</shortName>
        <ecNumber evidence="1">3.5.4.2</ecNumber>
    </recommendedName>
</protein>
<keyword id="KW-0378">Hydrolase</keyword>
<keyword id="KW-0464">Manganese</keyword>
<keyword id="KW-1185">Reference proteome</keyword>
<proteinExistence type="inferred from homology"/>
<organism>
    <name type="scientific">Ruegeria pomeroyi (strain ATCC 700808 / DSM 15171 / DSS-3)</name>
    <name type="common">Silicibacter pomeroyi</name>
    <dbReference type="NCBI Taxonomy" id="246200"/>
    <lineage>
        <taxon>Bacteria</taxon>
        <taxon>Pseudomonadati</taxon>
        <taxon>Pseudomonadota</taxon>
        <taxon>Alphaproteobacteria</taxon>
        <taxon>Rhodobacterales</taxon>
        <taxon>Roseobacteraceae</taxon>
        <taxon>Ruegeria</taxon>
    </lineage>
</organism>
<comment type="catalytic activity">
    <reaction evidence="1">
        <text>adenine + H2O + H(+) = hypoxanthine + NH4(+)</text>
        <dbReference type="Rhea" id="RHEA:23688"/>
        <dbReference type="ChEBI" id="CHEBI:15377"/>
        <dbReference type="ChEBI" id="CHEBI:15378"/>
        <dbReference type="ChEBI" id="CHEBI:16708"/>
        <dbReference type="ChEBI" id="CHEBI:17368"/>
        <dbReference type="ChEBI" id="CHEBI:28938"/>
        <dbReference type="EC" id="3.5.4.2"/>
    </reaction>
</comment>
<comment type="cofactor">
    <cofactor evidence="1">
        <name>Mn(2+)</name>
        <dbReference type="ChEBI" id="CHEBI:29035"/>
    </cofactor>
</comment>
<comment type="similarity">
    <text evidence="1">Belongs to the metallo-dependent hydrolases superfamily. Adenine deaminase family.</text>
</comment>
<dbReference type="EC" id="3.5.4.2" evidence="1"/>
<dbReference type="EMBL" id="CP000031">
    <property type="protein sequence ID" value="AAV96967.2"/>
    <property type="molecule type" value="Genomic_DNA"/>
</dbReference>
<dbReference type="RefSeq" id="WP_030003271.1">
    <property type="nucleotide sequence ID" value="NC_003911.12"/>
</dbReference>
<dbReference type="SMR" id="Q5LM18"/>
<dbReference type="STRING" id="246200.SPO3746"/>
<dbReference type="PaxDb" id="246200-SPO3746"/>
<dbReference type="KEGG" id="sil:SPO3746"/>
<dbReference type="eggNOG" id="COG1001">
    <property type="taxonomic scope" value="Bacteria"/>
</dbReference>
<dbReference type="HOGENOM" id="CLU_027935_0_0_5"/>
<dbReference type="OrthoDB" id="9775607at2"/>
<dbReference type="Proteomes" id="UP000001023">
    <property type="component" value="Chromosome"/>
</dbReference>
<dbReference type="GO" id="GO:0000034">
    <property type="term" value="F:adenine deaminase activity"/>
    <property type="evidence" value="ECO:0007669"/>
    <property type="project" value="UniProtKB-UniRule"/>
</dbReference>
<dbReference type="GO" id="GO:0006146">
    <property type="term" value="P:adenine catabolic process"/>
    <property type="evidence" value="ECO:0007669"/>
    <property type="project" value="InterPro"/>
</dbReference>
<dbReference type="CDD" id="cd01295">
    <property type="entry name" value="AdeC"/>
    <property type="match status" value="1"/>
</dbReference>
<dbReference type="Gene3D" id="3.20.20.140">
    <property type="entry name" value="Metal-dependent hydrolases"/>
    <property type="match status" value="1"/>
</dbReference>
<dbReference type="Gene3D" id="2.30.40.10">
    <property type="entry name" value="Urease, subunit C, domain 1"/>
    <property type="match status" value="1"/>
</dbReference>
<dbReference type="HAMAP" id="MF_01518">
    <property type="entry name" value="Adenine_deamin"/>
    <property type="match status" value="1"/>
</dbReference>
<dbReference type="InterPro" id="IPR006679">
    <property type="entry name" value="Adenine_deam"/>
</dbReference>
<dbReference type="InterPro" id="IPR026912">
    <property type="entry name" value="Adenine_deam_C"/>
</dbReference>
<dbReference type="InterPro" id="IPR006680">
    <property type="entry name" value="Amidohydro-rel"/>
</dbReference>
<dbReference type="InterPro" id="IPR011059">
    <property type="entry name" value="Metal-dep_hydrolase_composite"/>
</dbReference>
<dbReference type="InterPro" id="IPR032466">
    <property type="entry name" value="Metal_Hydrolase"/>
</dbReference>
<dbReference type="NCBIfam" id="TIGR01178">
    <property type="entry name" value="ade"/>
    <property type="match status" value="1"/>
</dbReference>
<dbReference type="PANTHER" id="PTHR11113:SF2">
    <property type="entry name" value="ADENINE DEAMINASE"/>
    <property type="match status" value="1"/>
</dbReference>
<dbReference type="PANTHER" id="PTHR11113">
    <property type="entry name" value="N-ACETYLGLUCOSAMINE-6-PHOSPHATE DEACETYLASE"/>
    <property type="match status" value="1"/>
</dbReference>
<dbReference type="Pfam" id="PF13382">
    <property type="entry name" value="Adenine_deam_C"/>
    <property type="match status" value="1"/>
</dbReference>
<dbReference type="Pfam" id="PF01979">
    <property type="entry name" value="Amidohydro_1"/>
    <property type="match status" value="1"/>
</dbReference>
<dbReference type="SUPFAM" id="SSF51338">
    <property type="entry name" value="Composite domain of metallo-dependent hydrolases"/>
    <property type="match status" value="1"/>
</dbReference>
<dbReference type="SUPFAM" id="SSF51556">
    <property type="entry name" value="Metallo-dependent hydrolases"/>
    <property type="match status" value="1"/>
</dbReference>